<reference key="1">
    <citation type="journal article" date="2004" name="Nature">
        <title>Genome evolution in yeasts.</title>
        <authorList>
            <person name="Dujon B."/>
            <person name="Sherman D."/>
            <person name="Fischer G."/>
            <person name="Durrens P."/>
            <person name="Casaregola S."/>
            <person name="Lafontaine I."/>
            <person name="de Montigny J."/>
            <person name="Marck C."/>
            <person name="Neuveglise C."/>
            <person name="Talla E."/>
            <person name="Goffard N."/>
            <person name="Frangeul L."/>
            <person name="Aigle M."/>
            <person name="Anthouard V."/>
            <person name="Babour A."/>
            <person name="Barbe V."/>
            <person name="Barnay S."/>
            <person name="Blanchin S."/>
            <person name="Beckerich J.-M."/>
            <person name="Beyne E."/>
            <person name="Bleykasten C."/>
            <person name="Boisrame A."/>
            <person name="Boyer J."/>
            <person name="Cattolico L."/>
            <person name="Confanioleri F."/>
            <person name="de Daruvar A."/>
            <person name="Despons L."/>
            <person name="Fabre E."/>
            <person name="Fairhead C."/>
            <person name="Ferry-Dumazet H."/>
            <person name="Groppi A."/>
            <person name="Hantraye F."/>
            <person name="Hennequin C."/>
            <person name="Jauniaux N."/>
            <person name="Joyet P."/>
            <person name="Kachouri R."/>
            <person name="Kerrest A."/>
            <person name="Koszul R."/>
            <person name="Lemaire M."/>
            <person name="Lesur I."/>
            <person name="Ma L."/>
            <person name="Muller H."/>
            <person name="Nicaud J.-M."/>
            <person name="Nikolski M."/>
            <person name="Oztas S."/>
            <person name="Ozier-Kalogeropoulos O."/>
            <person name="Pellenz S."/>
            <person name="Potier S."/>
            <person name="Richard G.-F."/>
            <person name="Straub M.-L."/>
            <person name="Suleau A."/>
            <person name="Swennen D."/>
            <person name="Tekaia F."/>
            <person name="Wesolowski-Louvel M."/>
            <person name="Westhof E."/>
            <person name="Wirth B."/>
            <person name="Zeniou-Meyer M."/>
            <person name="Zivanovic Y."/>
            <person name="Bolotin-Fukuhara M."/>
            <person name="Thierry A."/>
            <person name="Bouchier C."/>
            <person name="Caudron B."/>
            <person name="Scarpelli C."/>
            <person name="Gaillardin C."/>
            <person name="Weissenbach J."/>
            <person name="Wincker P."/>
            <person name="Souciet J.-L."/>
        </authorList>
    </citation>
    <scope>NUCLEOTIDE SEQUENCE [LARGE SCALE GENOMIC DNA]</scope>
    <source>
        <strain>ATCC 36239 / CBS 767 / BCRC 21394 / JCM 1990 / NBRC 0083 / IGC 2968</strain>
    </source>
</reference>
<gene>
    <name type="primary">RIB7</name>
    <name type="ordered locus">DEHA2G10010g</name>
</gene>
<name>RIB7_DEBHA</name>
<evidence type="ECO:0000250" key="1"/>
<evidence type="ECO:0000305" key="2"/>
<comment type="function">
    <text evidence="1">Catalyzes an early step in riboflavin biosynthesis, the NADPH-dependent reduction of the ribose side chain of 2,5-diamino-6-ribosylamino-4(3H)-pyrimidinone 5'-phosphate, yielding 2,5-diamino-6-ribitylamino-4(3H)-pyrimidinone 5'-phosphate.</text>
</comment>
<comment type="catalytic activity">
    <reaction>
        <text>2,5-diamino-6-(1-D-ribitylamino)pyrimidin-4(3H)-one 5'-phosphate + NADP(+) = 2,5-diamino-6-(1-D-ribosylamino)pyrimidin-4(3H)-one 5'-phosphate + NADPH + H(+)</text>
        <dbReference type="Rhea" id="RHEA:27278"/>
        <dbReference type="ChEBI" id="CHEBI:15378"/>
        <dbReference type="ChEBI" id="CHEBI:57783"/>
        <dbReference type="ChEBI" id="CHEBI:58349"/>
        <dbReference type="ChEBI" id="CHEBI:58890"/>
        <dbReference type="ChEBI" id="CHEBI:59545"/>
        <dbReference type="EC" id="1.1.1.302"/>
    </reaction>
</comment>
<comment type="catalytic activity">
    <reaction>
        <text>2,5-diamino-6-(1-D-ribitylamino)pyrimidin-4(3H)-one 5'-phosphate + NAD(+) = 2,5-diamino-6-(1-D-ribosylamino)pyrimidin-4(3H)-one 5'-phosphate + NADH + H(+)</text>
        <dbReference type="Rhea" id="RHEA:27274"/>
        <dbReference type="ChEBI" id="CHEBI:15378"/>
        <dbReference type="ChEBI" id="CHEBI:57540"/>
        <dbReference type="ChEBI" id="CHEBI:57945"/>
        <dbReference type="ChEBI" id="CHEBI:58890"/>
        <dbReference type="ChEBI" id="CHEBI:59545"/>
        <dbReference type="EC" id="1.1.1.302"/>
    </reaction>
</comment>
<comment type="pathway">
    <text>Cofactor biosynthesis; riboflavin biosynthesis.</text>
</comment>
<comment type="subunit">
    <text evidence="1">Homodimer.</text>
</comment>
<comment type="similarity">
    <text evidence="2">Belongs to the HTP reductase family.</text>
</comment>
<keyword id="KW-0521">NADP</keyword>
<keyword id="KW-0560">Oxidoreductase</keyword>
<keyword id="KW-1185">Reference proteome</keyword>
<keyword id="KW-0686">Riboflavin biosynthesis</keyword>
<dbReference type="EC" id="1.1.1.302"/>
<dbReference type="EMBL" id="CR382139">
    <property type="protein sequence ID" value="CAG90452.1"/>
    <property type="molecule type" value="Genomic_DNA"/>
</dbReference>
<dbReference type="RefSeq" id="XP_461982.1">
    <property type="nucleotide sequence ID" value="XM_461982.1"/>
</dbReference>
<dbReference type="SMR" id="Q6BII9"/>
<dbReference type="FunCoup" id="Q6BII9">
    <property type="interactions" value="123"/>
</dbReference>
<dbReference type="STRING" id="284592.Q6BII9"/>
<dbReference type="GeneID" id="2904875"/>
<dbReference type="KEGG" id="dha:DEHA2G10010g"/>
<dbReference type="eggNOG" id="ENOG502RZWZ">
    <property type="taxonomic scope" value="Eukaryota"/>
</dbReference>
<dbReference type="HOGENOM" id="CLU_036590_5_0_1"/>
<dbReference type="InParanoid" id="Q6BII9"/>
<dbReference type="OMA" id="HYLRYHH"/>
<dbReference type="OrthoDB" id="5432at2759"/>
<dbReference type="UniPathway" id="UPA00275"/>
<dbReference type="Proteomes" id="UP000000599">
    <property type="component" value="Chromosome G"/>
</dbReference>
<dbReference type="GO" id="GO:0008703">
    <property type="term" value="F:5-amino-6-(5-phosphoribosylamino)uracil reductase activity"/>
    <property type="evidence" value="ECO:0007669"/>
    <property type="project" value="EnsemblFungi"/>
</dbReference>
<dbReference type="GO" id="GO:0050661">
    <property type="term" value="F:NADP binding"/>
    <property type="evidence" value="ECO:0007669"/>
    <property type="project" value="InterPro"/>
</dbReference>
<dbReference type="GO" id="GO:0009231">
    <property type="term" value="P:riboflavin biosynthetic process"/>
    <property type="evidence" value="ECO:0007669"/>
    <property type="project" value="UniProtKB-UniPathway"/>
</dbReference>
<dbReference type="Gene3D" id="3.40.430.10">
    <property type="entry name" value="Dihydrofolate Reductase, subunit A"/>
    <property type="match status" value="1"/>
</dbReference>
<dbReference type="InterPro" id="IPR024072">
    <property type="entry name" value="DHFR-like_dom_sf"/>
</dbReference>
<dbReference type="InterPro" id="IPR011549">
    <property type="entry name" value="RibD_C"/>
</dbReference>
<dbReference type="InterPro" id="IPR002734">
    <property type="entry name" value="RibDG_C"/>
</dbReference>
<dbReference type="InterPro" id="IPR050765">
    <property type="entry name" value="Riboflavin_Biosynth_HTPR"/>
</dbReference>
<dbReference type="NCBIfam" id="TIGR00227">
    <property type="entry name" value="ribD_Cterm"/>
    <property type="match status" value="1"/>
</dbReference>
<dbReference type="PANTHER" id="PTHR38011:SF7">
    <property type="entry name" value="2,5-DIAMINO-6-RIBOSYLAMINO-4(3H)-PYRIMIDINONE 5'-PHOSPHATE REDUCTASE"/>
    <property type="match status" value="1"/>
</dbReference>
<dbReference type="PANTHER" id="PTHR38011">
    <property type="entry name" value="DIHYDROFOLATE REDUCTASE FAMILY PROTEIN (AFU_ORTHOLOGUE AFUA_8G06820)"/>
    <property type="match status" value="1"/>
</dbReference>
<dbReference type="Pfam" id="PF01872">
    <property type="entry name" value="RibD_C"/>
    <property type="match status" value="1"/>
</dbReference>
<dbReference type="SUPFAM" id="SSF53597">
    <property type="entry name" value="Dihydrofolate reductase-like"/>
    <property type="match status" value="1"/>
</dbReference>
<protein>
    <recommendedName>
        <fullName>2,5-diamino-6-ribosylamino-4(3H)-pyrimidinone 5'-phosphate reductase</fullName>
        <shortName>DAROPP reductase</shortName>
        <shortName>DARP reductase</shortName>
        <ecNumber>1.1.1.302</ecNumber>
    </recommendedName>
    <alternativeName>
        <fullName>2,5-diamino-6-(5-phospho-D-ribosylamino)pyrimidin-4(3H)-one reductase</fullName>
    </alternativeName>
    <alternativeName>
        <fullName>2,5-diamino-6-ribitylamino-4(3H)-pyrimidinone 5'-phosphate synthase</fullName>
        <shortName>DARIPP synthase</shortName>
    </alternativeName>
</protein>
<feature type="chain" id="PRO_0000135938" description="2,5-diamino-6-ribosylamino-4(3H)-pyrimidinone 5'-phosphate reductase">
    <location>
        <begin position="1"/>
        <end position="247"/>
    </location>
</feature>
<feature type="binding site" evidence="1">
    <location>
        <position position="75"/>
    </location>
    <ligand>
        <name>NADP(+)</name>
        <dbReference type="ChEBI" id="CHEBI:58349"/>
    </ligand>
</feature>
<feature type="binding site" evidence="1">
    <location>
        <position position="79"/>
    </location>
    <ligand>
        <name>NADP(+)</name>
        <dbReference type="ChEBI" id="CHEBI:58349"/>
    </ligand>
</feature>
<feature type="binding site">
    <location>
        <position position="165"/>
    </location>
    <ligand>
        <name>NADP(+)</name>
        <dbReference type="ChEBI" id="CHEBI:58349"/>
    </ligand>
</feature>
<feature type="binding site" evidence="1">
    <location>
        <begin position="187"/>
        <end position="191"/>
    </location>
    <ligand>
        <name>NADP(+)</name>
        <dbReference type="ChEBI" id="CHEBI:58349"/>
    </ligand>
</feature>
<proteinExistence type="inferred from homology"/>
<sequence>MSLLPLTPSLRPFLEEYLPRPCSNRPFVTLTYAQSLDSRIAAKPGEQTKISHLETKTMTHYIRSKHDGIMVGIGTVLADDPKLNCRFEAEDGNISTPRPIILDPTGKWAYHKSQLRSVCDNNKGLAPFILIDETVTPRNEDVEVLDKQDGAFVRLPLLRNADKVGNWNIILKKLFQLGIKSIMVEGGASIINDLLVYSKIIDSLIITIGPVFLGKDGVEVSPSGHAGLIDVKWWQGIQDSVLCARLT</sequence>
<accession>Q6BII9</accession>
<organism>
    <name type="scientific">Debaryomyces hansenii (strain ATCC 36239 / CBS 767 / BCRC 21394 / JCM 1990 / NBRC 0083 / IGC 2968)</name>
    <name type="common">Yeast</name>
    <name type="synonym">Torulaspora hansenii</name>
    <dbReference type="NCBI Taxonomy" id="284592"/>
    <lineage>
        <taxon>Eukaryota</taxon>
        <taxon>Fungi</taxon>
        <taxon>Dikarya</taxon>
        <taxon>Ascomycota</taxon>
        <taxon>Saccharomycotina</taxon>
        <taxon>Pichiomycetes</taxon>
        <taxon>Debaryomycetaceae</taxon>
        <taxon>Debaryomyces</taxon>
    </lineage>
</organism>